<protein>
    <recommendedName>
        <fullName evidence="2">Glutathione synthetase</fullName>
        <ecNumber evidence="2">6.3.2.3</ecNumber>
    </recommendedName>
    <alternativeName>
        <fullName evidence="2">GSH synthetase</fullName>
        <shortName evidence="2">GSH-S</shortName>
        <shortName evidence="2">GSHase</shortName>
    </alternativeName>
    <alternativeName>
        <fullName evidence="2">Glutathione synthase</fullName>
    </alternativeName>
</protein>
<keyword id="KW-0067">ATP-binding</keyword>
<keyword id="KW-0317">Glutathione biosynthesis</keyword>
<keyword id="KW-0436">Ligase</keyword>
<keyword id="KW-0460">Magnesium</keyword>
<keyword id="KW-0464">Manganese</keyword>
<keyword id="KW-0479">Metal-binding</keyword>
<keyword id="KW-0547">Nucleotide-binding</keyword>
<keyword id="KW-1185">Reference proteome</keyword>
<feature type="chain" id="PRO_0000197450" description="Glutathione synthetase">
    <location>
        <begin position="1"/>
        <end position="319"/>
    </location>
</feature>
<feature type="domain" description="ATP-grasp" evidence="2">
    <location>
        <begin position="127"/>
        <end position="311"/>
    </location>
</feature>
<feature type="binding site" evidence="2">
    <location>
        <begin position="153"/>
        <end position="209"/>
    </location>
    <ligand>
        <name>ATP</name>
        <dbReference type="ChEBI" id="CHEBI:30616"/>
    </ligand>
</feature>
<feature type="binding site" evidence="2">
    <location>
        <position position="282"/>
    </location>
    <ligand>
        <name>Mg(2+)</name>
        <dbReference type="ChEBI" id="CHEBI:18420"/>
    </ligand>
</feature>
<feature type="binding site" evidence="2">
    <location>
        <position position="284"/>
    </location>
    <ligand>
        <name>Mg(2+)</name>
        <dbReference type="ChEBI" id="CHEBI:18420"/>
    </ligand>
</feature>
<organism>
    <name type="scientific">Agrobacterium fabrum (strain C58 / ATCC 33970)</name>
    <name type="common">Agrobacterium tumefaciens (strain C58)</name>
    <dbReference type="NCBI Taxonomy" id="176299"/>
    <lineage>
        <taxon>Bacteria</taxon>
        <taxon>Pseudomonadati</taxon>
        <taxon>Pseudomonadota</taxon>
        <taxon>Alphaproteobacteria</taxon>
        <taxon>Hyphomicrobiales</taxon>
        <taxon>Rhizobiaceae</taxon>
        <taxon>Rhizobium/Agrobacterium group</taxon>
        <taxon>Agrobacterium</taxon>
        <taxon>Agrobacterium tumefaciens complex</taxon>
    </lineage>
</organism>
<evidence type="ECO:0000250" key="1"/>
<evidence type="ECO:0000255" key="2">
    <source>
        <dbReference type="HAMAP-Rule" id="MF_00162"/>
    </source>
</evidence>
<gene>
    <name evidence="2" type="primary">gshB</name>
    <name type="ordered locus">Atu0310</name>
    <name type="ORF">AGR_C_538</name>
</gene>
<dbReference type="EC" id="6.3.2.3" evidence="2"/>
<dbReference type="EMBL" id="AE007869">
    <property type="protein sequence ID" value="AAK86126.2"/>
    <property type="molecule type" value="Genomic_DNA"/>
</dbReference>
<dbReference type="PIR" id="AF2614">
    <property type="entry name" value="AF2614"/>
</dbReference>
<dbReference type="PIR" id="E97396">
    <property type="entry name" value="E97396"/>
</dbReference>
<dbReference type="RefSeq" id="NP_353341.2">
    <property type="nucleotide sequence ID" value="NC_003062.2"/>
</dbReference>
<dbReference type="RefSeq" id="WP_006310157.1">
    <property type="nucleotide sequence ID" value="NC_003062.2"/>
</dbReference>
<dbReference type="SMR" id="Q8UII5"/>
<dbReference type="STRING" id="176299.Atu0310"/>
<dbReference type="EnsemblBacteria" id="AAK86126">
    <property type="protein sequence ID" value="AAK86126"/>
    <property type="gene ID" value="Atu0310"/>
</dbReference>
<dbReference type="GeneID" id="1132348"/>
<dbReference type="KEGG" id="atu:Atu0310"/>
<dbReference type="PATRIC" id="fig|176299.10.peg.302"/>
<dbReference type="eggNOG" id="COG0189">
    <property type="taxonomic scope" value="Bacteria"/>
</dbReference>
<dbReference type="HOGENOM" id="CLU_068239_0_0_5"/>
<dbReference type="OrthoDB" id="9785415at2"/>
<dbReference type="PhylomeDB" id="Q8UII5"/>
<dbReference type="BioCyc" id="AGRO:ATU0310-MONOMER"/>
<dbReference type="UniPathway" id="UPA00142">
    <property type="reaction ID" value="UER00210"/>
</dbReference>
<dbReference type="Proteomes" id="UP000000813">
    <property type="component" value="Chromosome circular"/>
</dbReference>
<dbReference type="GO" id="GO:0005737">
    <property type="term" value="C:cytoplasm"/>
    <property type="evidence" value="ECO:0007669"/>
    <property type="project" value="TreeGrafter"/>
</dbReference>
<dbReference type="GO" id="GO:0005524">
    <property type="term" value="F:ATP binding"/>
    <property type="evidence" value="ECO:0007669"/>
    <property type="project" value="UniProtKB-UniRule"/>
</dbReference>
<dbReference type="GO" id="GO:0004363">
    <property type="term" value="F:glutathione synthase activity"/>
    <property type="evidence" value="ECO:0007669"/>
    <property type="project" value="UniProtKB-UniRule"/>
</dbReference>
<dbReference type="GO" id="GO:0046872">
    <property type="term" value="F:metal ion binding"/>
    <property type="evidence" value="ECO:0007669"/>
    <property type="project" value="UniProtKB-KW"/>
</dbReference>
<dbReference type="Gene3D" id="3.40.50.20">
    <property type="match status" value="1"/>
</dbReference>
<dbReference type="Gene3D" id="3.30.1490.20">
    <property type="entry name" value="ATP-grasp fold, A domain"/>
    <property type="match status" value="1"/>
</dbReference>
<dbReference type="Gene3D" id="3.30.470.20">
    <property type="entry name" value="ATP-grasp fold, B domain"/>
    <property type="match status" value="1"/>
</dbReference>
<dbReference type="HAMAP" id="MF_00162">
    <property type="entry name" value="GSH_S"/>
    <property type="match status" value="1"/>
</dbReference>
<dbReference type="InterPro" id="IPR011761">
    <property type="entry name" value="ATP-grasp"/>
</dbReference>
<dbReference type="InterPro" id="IPR013815">
    <property type="entry name" value="ATP_grasp_subdomain_1"/>
</dbReference>
<dbReference type="InterPro" id="IPR006284">
    <property type="entry name" value="Glut_synth_pro"/>
</dbReference>
<dbReference type="InterPro" id="IPR004218">
    <property type="entry name" value="GSHS_ATP-bd"/>
</dbReference>
<dbReference type="InterPro" id="IPR004215">
    <property type="entry name" value="GSHS_N"/>
</dbReference>
<dbReference type="InterPro" id="IPR016185">
    <property type="entry name" value="PreATP-grasp_dom_sf"/>
</dbReference>
<dbReference type="NCBIfam" id="TIGR01380">
    <property type="entry name" value="glut_syn"/>
    <property type="match status" value="1"/>
</dbReference>
<dbReference type="NCBIfam" id="NF003573">
    <property type="entry name" value="PRK05246.1"/>
    <property type="match status" value="1"/>
</dbReference>
<dbReference type="PANTHER" id="PTHR21621:SF4">
    <property type="entry name" value="GLUTATHIONE SYNTHETASE"/>
    <property type="match status" value="1"/>
</dbReference>
<dbReference type="PANTHER" id="PTHR21621">
    <property type="entry name" value="RIBOSOMAL PROTEIN S6 MODIFICATION PROTEIN"/>
    <property type="match status" value="1"/>
</dbReference>
<dbReference type="Pfam" id="PF02955">
    <property type="entry name" value="GSH-S_ATP"/>
    <property type="match status" value="1"/>
</dbReference>
<dbReference type="Pfam" id="PF02951">
    <property type="entry name" value="GSH-S_N"/>
    <property type="match status" value="1"/>
</dbReference>
<dbReference type="SUPFAM" id="SSF56059">
    <property type="entry name" value="Glutathione synthetase ATP-binding domain-like"/>
    <property type="match status" value="1"/>
</dbReference>
<dbReference type="SUPFAM" id="SSF52440">
    <property type="entry name" value="PreATP-grasp domain"/>
    <property type="match status" value="1"/>
</dbReference>
<dbReference type="PROSITE" id="PS50975">
    <property type="entry name" value="ATP_GRASP"/>
    <property type="match status" value="1"/>
</dbReference>
<proteinExistence type="inferred from homology"/>
<name>GSHB_AGRFC</name>
<sequence>MAKIKNVAIQMDHVSGINIAGDSTFAISLEAQARGYRLFHYTPERLSMRDGKIYATVEQMELRDIKGDHFSLSEPERVDLSTMDVIHLRQDPPFDMAYITSTHLLERIHPKTLVVNDPAWVRNSPEKIFVTEFADLMPKTLITKDVSEIARFRNEMGDIILKPLYGNGGAGVFHSARDDRNFSSLLEMFGQMFREPYIAQEYLPDVRKGDKRILLVDGEPVGAINRVPAENDARSNMHAGGRPEPTELTAREQEICRRIGPALRERGFLFVGIDVIGDYMTEINVTSPTGIREVRKFGGADVASLLWDAIEKKRDAQDF</sequence>
<accession>Q8UII5</accession>
<reference key="1">
    <citation type="journal article" date="2001" name="Science">
        <title>The genome of the natural genetic engineer Agrobacterium tumefaciens C58.</title>
        <authorList>
            <person name="Wood D.W."/>
            <person name="Setubal J.C."/>
            <person name="Kaul R."/>
            <person name="Monks D.E."/>
            <person name="Kitajima J.P."/>
            <person name="Okura V.K."/>
            <person name="Zhou Y."/>
            <person name="Chen L."/>
            <person name="Wood G.E."/>
            <person name="Almeida N.F. Jr."/>
            <person name="Woo L."/>
            <person name="Chen Y."/>
            <person name="Paulsen I.T."/>
            <person name="Eisen J.A."/>
            <person name="Karp P.D."/>
            <person name="Bovee D. Sr."/>
            <person name="Chapman P."/>
            <person name="Clendenning J."/>
            <person name="Deatherage G."/>
            <person name="Gillet W."/>
            <person name="Grant C."/>
            <person name="Kutyavin T."/>
            <person name="Levy R."/>
            <person name="Li M.-J."/>
            <person name="McClelland E."/>
            <person name="Palmieri A."/>
            <person name="Raymond C."/>
            <person name="Rouse G."/>
            <person name="Saenphimmachak C."/>
            <person name="Wu Z."/>
            <person name="Romero P."/>
            <person name="Gordon D."/>
            <person name="Zhang S."/>
            <person name="Yoo H."/>
            <person name="Tao Y."/>
            <person name="Biddle P."/>
            <person name="Jung M."/>
            <person name="Krespan W."/>
            <person name="Perry M."/>
            <person name="Gordon-Kamm B."/>
            <person name="Liao L."/>
            <person name="Kim S."/>
            <person name="Hendrick C."/>
            <person name="Zhao Z.-Y."/>
            <person name="Dolan M."/>
            <person name="Chumley F."/>
            <person name="Tingey S.V."/>
            <person name="Tomb J.-F."/>
            <person name="Gordon M.P."/>
            <person name="Olson M.V."/>
            <person name="Nester E.W."/>
        </authorList>
    </citation>
    <scope>NUCLEOTIDE SEQUENCE [LARGE SCALE GENOMIC DNA]</scope>
    <source>
        <strain>C58 / ATCC 33970</strain>
    </source>
</reference>
<reference key="2">
    <citation type="journal article" date="2001" name="Science">
        <title>Genome sequence of the plant pathogen and biotechnology agent Agrobacterium tumefaciens C58.</title>
        <authorList>
            <person name="Goodner B."/>
            <person name="Hinkle G."/>
            <person name="Gattung S."/>
            <person name="Miller N."/>
            <person name="Blanchard M."/>
            <person name="Qurollo B."/>
            <person name="Goldman B.S."/>
            <person name="Cao Y."/>
            <person name="Askenazi M."/>
            <person name="Halling C."/>
            <person name="Mullin L."/>
            <person name="Houmiel K."/>
            <person name="Gordon J."/>
            <person name="Vaudin M."/>
            <person name="Iartchouk O."/>
            <person name="Epp A."/>
            <person name="Liu F."/>
            <person name="Wollam C."/>
            <person name="Allinger M."/>
            <person name="Doughty D."/>
            <person name="Scott C."/>
            <person name="Lappas C."/>
            <person name="Markelz B."/>
            <person name="Flanagan C."/>
            <person name="Crowell C."/>
            <person name="Gurson J."/>
            <person name="Lomo C."/>
            <person name="Sear C."/>
            <person name="Strub G."/>
            <person name="Cielo C."/>
            <person name="Slater S."/>
        </authorList>
    </citation>
    <scope>NUCLEOTIDE SEQUENCE [LARGE SCALE GENOMIC DNA]</scope>
    <source>
        <strain>C58 / ATCC 33970</strain>
    </source>
</reference>
<comment type="catalytic activity">
    <reaction evidence="2">
        <text>gamma-L-glutamyl-L-cysteine + glycine + ATP = glutathione + ADP + phosphate + H(+)</text>
        <dbReference type="Rhea" id="RHEA:13557"/>
        <dbReference type="ChEBI" id="CHEBI:15378"/>
        <dbReference type="ChEBI" id="CHEBI:30616"/>
        <dbReference type="ChEBI" id="CHEBI:43474"/>
        <dbReference type="ChEBI" id="CHEBI:57305"/>
        <dbReference type="ChEBI" id="CHEBI:57925"/>
        <dbReference type="ChEBI" id="CHEBI:58173"/>
        <dbReference type="ChEBI" id="CHEBI:456216"/>
        <dbReference type="EC" id="6.3.2.3"/>
    </reaction>
</comment>
<comment type="cofactor">
    <cofactor evidence="1">
        <name>Mg(2+)</name>
        <dbReference type="ChEBI" id="CHEBI:18420"/>
    </cofactor>
    <cofactor evidence="1">
        <name>Mn(2+)</name>
        <dbReference type="ChEBI" id="CHEBI:29035"/>
    </cofactor>
    <text evidence="1">Binds 1 Mg(2+) or Mn(2+) ion per subunit.</text>
</comment>
<comment type="pathway">
    <text evidence="2">Sulfur metabolism; glutathione biosynthesis; glutathione from L-cysteine and L-glutamate: step 2/2.</text>
</comment>
<comment type="similarity">
    <text evidence="2">Belongs to the prokaryotic GSH synthase family.</text>
</comment>